<comment type="similarity">
    <text evidence="2">Belongs to the methyltransferase superfamily.</text>
</comment>
<sequence>MTNETPFSKNAEMYRDEKVFAEGEDLGLMIKTAECRAEHRVLDIGAGAGHTALAFSPYVQECIGVDATKEMVEVASSFAQEKGVENVRFQQGTAESLPFPDDSFDIITCRYAAHHFSDVRKAVREVARVLKQDGRFLLVDHYAPEDPVLDEFVNHLNRLRDPSHVRESSLSEWQAMFSANQLAYQDIQKWNLPIQYDSWIKRGGTPADREKQIITHLNHASDEARDTFCITLNQNGQPISFCLKAILIQGIKR</sequence>
<organism>
    <name type="scientific">Bacillus subtilis (strain 168)</name>
    <dbReference type="NCBI Taxonomy" id="224308"/>
    <lineage>
        <taxon>Bacteria</taxon>
        <taxon>Bacillati</taxon>
        <taxon>Bacillota</taxon>
        <taxon>Bacilli</taxon>
        <taxon>Bacillales</taxon>
        <taxon>Bacillaceae</taxon>
        <taxon>Bacillus</taxon>
    </lineage>
</organism>
<accession>O31474</accession>
<dbReference type="EC" id="2.1.1.-"/>
<dbReference type="EMBL" id="AL009126">
    <property type="protein sequence ID" value="CAB12110.2"/>
    <property type="molecule type" value="Genomic_DNA"/>
</dbReference>
<dbReference type="PIR" id="E69758">
    <property type="entry name" value="E69758"/>
</dbReference>
<dbReference type="RefSeq" id="NP_388198.2">
    <property type="nucleotide sequence ID" value="NC_000964.3"/>
</dbReference>
<dbReference type="RefSeq" id="WP_003246488.1">
    <property type="nucleotide sequence ID" value="NZ_OZ025638.1"/>
</dbReference>
<dbReference type="PDB" id="1XXL">
    <property type="method" value="X-ray"/>
    <property type="resolution" value="2.10 A"/>
    <property type="chains" value="A/B=27-253"/>
</dbReference>
<dbReference type="PDB" id="2GLU">
    <property type="method" value="X-ray"/>
    <property type="resolution" value="2.91 A"/>
    <property type="chains" value="A/B=27-253"/>
</dbReference>
<dbReference type="PDBsum" id="1XXL"/>
<dbReference type="PDBsum" id="2GLU"/>
<dbReference type="SMR" id="O31474"/>
<dbReference type="FunCoup" id="O31474">
    <property type="interactions" value="135"/>
</dbReference>
<dbReference type="STRING" id="224308.BSU03160"/>
<dbReference type="PaxDb" id="224308-BSU03160"/>
<dbReference type="EnsemblBacteria" id="CAB12110">
    <property type="protein sequence ID" value="CAB12110"/>
    <property type="gene ID" value="BSU_03160"/>
</dbReference>
<dbReference type="GeneID" id="938344"/>
<dbReference type="KEGG" id="bsu:BSU03160"/>
<dbReference type="PATRIC" id="fig|224308.179.peg.330"/>
<dbReference type="eggNOG" id="COG2226">
    <property type="taxonomic scope" value="Bacteria"/>
</dbReference>
<dbReference type="InParanoid" id="O31474"/>
<dbReference type="OrthoDB" id="43862at2"/>
<dbReference type="PhylomeDB" id="O31474"/>
<dbReference type="BioCyc" id="BSUB:BSU03160-MONOMER"/>
<dbReference type="EvolutionaryTrace" id="O31474"/>
<dbReference type="Proteomes" id="UP000001570">
    <property type="component" value="Chromosome"/>
</dbReference>
<dbReference type="GO" id="GO:0008168">
    <property type="term" value="F:methyltransferase activity"/>
    <property type="evidence" value="ECO:0000318"/>
    <property type="project" value="GO_Central"/>
</dbReference>
<dbReference type="GO" id="GO:0008757">
    <property type="term" value="F:S-adenosylmethionine-dependent methyltransferase activity"/>
    <property type="evidence" value="ECO:0007669"/>
    <property type="project" value="InterPro"/>
</dbReference>
<dbReference type="GO" id="GO:0032259">
    <property type="term" value="P:methylation"/>
    <property type="evidence" value="ECO:0007669"/>
    <property type="project" value="UniProtKB-KW"/>
</dbReference>
<dbReference type="CDD" id="cd02440">
    <property type="entry name" value="AdoMet_MTases"/>
    <property type="match status" value="1"/>
</dbReference>
<dbReference type="Gene3D" id="3.40.50.150">
    <property type="entry name" value="Vaccinia Virus protein VP39"/>
    <property type="match status" value="1"/>
</dbReference>
<dbReference type="InterPro" id="IPR051052">
    <property type="entry name" value="Diverse_substrate_MTase"/>
</dbReference>
<dbReference type="InterPro" id="IPR013216">
    <property type="entry name" value="Methyltransf_11"/>
</dbReference>
<dbReference type="InterPro" id="IPR029063">
    <property type="entry name" value="SAM-dependent_MTases_sf"/>
</dbReference>
<dbReference type="PANTHER" id="PTHR44942">
    <property type="entry name" value="METHYLTRANSF_11 DOMAIN-CONTAINING PROTEIN"/>
    <property type="match status" value="1"/>
</dbReference>
<dbReference type="PANTHER" id="PTHR44942:SF4">
    <property type="entry name" value="METHYLTRANSFERASE TYPE 11 DOMAIN-CONTAINING PROTEIN"/>
    <property type="match status" value="1"/>
</dbReference>
<dbReference type="Pfam" id="PF08241">
    <property type="entry name" value="Methyltransf_11"/>
    <property type="match status" value="1"/>
</dbReference>
<dbReference type="SUPFAM" id="SSF53335">
    <property type="entry name" value="S-adenosyl-L-methionine-dependent methyltransferases"/>
    <property type="match status" value="1"/>
</dbReference>
<reference key="1">
    <citation type="journal article" date="1997" name="Nature">
        <title>The complete genome sequence of the Gram-positive bacterium Bacillus subtilis.</title>
        <authorList>
            <person name="Kunst F."/>
            <person name="Ogasawara N."/>
            <person name="Moszer I."/>
            <person name="Albertini A.M."/>
            <person name="Alloni G."/>
            <person name="Azevedo V."/>
            <person name="Bertero M.G."/>
            <person name="Bessieres P."/>
            <person name="Bolotin A."/>
            <person name="Borchert S."/>
            <person name="Borriss R."/>
            <person name="Boursier L."/>
            <person name="Brans A."/>
            <person name="Braun M."/>
            <person name="Brignell S.C."/>
            <person name="Bron S."/>
            <person name="Brouillet S."/>
            <person name="Bruschi C.V."/>
            <person name="Caldwell B."/>
            <person name="Capuano V."/>
            <person name="Carter N.M."/>
            <person name="Choi S.-K."/>
            <person name="Codani J.-J."/>
            <person name="Connerton I.F."/>
            <person name="Cummings N.J."/>
            <person name="Daniel R.A."/>
            <person name="Denizot F."/>
            <person name="Devine K.M."/>
            <person name="Duesterhoeft A."/>
            <person name="Ehrlich S.D."/>
            <person name="Emmerson P.T."/>
            <person name="Entian K.-D."/>
            <person name="Errington J."/>
            <person name="Fabret C."/>
            <person name="Ferrari E."/>
            <person name="Foulger D."/>
            <person name="Fritz C."/>
            <person name="Fujita M."/>
            <person name="Fujita Y."/>
            <person name="Fuma S."/>
            <person name="Galizzi A."/>
            <person name="Galleron N."/>
            <person name="Ghim S.-Y."/>
            <person name="Glaser P."/>
            <person name="Goffeau A."/>
            <person name="Golightly E.J."/>
            <person name="Grandi G."/>
            <person name="Guiseppi G."/>
            <person name="Guy B.J."/>
            <person name="Haga K."/>
            <person name="Haiech J."/>
            <person name="Harwood C.R."/>
            <person name="Henaut A."/>
            <person name="Hilbert H."/>
            <person name="Holsappel S."/>
            <person name="Hosono S."/>
            <person name="Hullo M.-F."/>
            <person name="Itaya M."/>
            <person name="Jones L.-M."/>
            <person name="Joris B."/>
            <person name="Karamata D."/>
            <person name="Kasahara Y."/>
            <person name="Klaerr-Blanchard M."/>
            <person name="Klein C."/>
            <person name="Kobayashi Y."/>
            <person name="Koetter P."/>
            <person name="Koningstein G."/>
            <person name="Krogh S."/>
            <person name="Kumano M."/>
            <person name="Kurita K."/>
            <person name="Lapidus A."/>
            <person name="Lardinois S."/>
            <person name="Lauber J."/>
            <person name="Lazarevic V."/>
            <person name="Lee S.-M."/>
            <person name="Levine A."/>
            <person name="Liu H."/>
            <person name="Masuda S."/>
            <person name="Mauel C."/>
            <person name="Medigue C."/>
            <person name="Medina N."/>
            <person name="Mellado R.P."/>
            <person name="Mizuno M."/>
            <person name="Moestl D."/>
            <person name="Nakai S."/>
            <person name="Noback M."/>
            <person name="Noone D."/>
            <person name="O'Reilly M."/>
            <person name="Ogawa K."/>
            <person name="Ogiwara A."/>
            <person name="Oudega B."/>
            <person name="Park S.-H."/>
            <person name="Parro V."/>
            <person name="Pohl T.M."/>
            <person name="Portetelle D."/>
            <person name="Porwollik S."/>
            <person name="Prescott A.M."/>
            <person name="Presecan E."/>
            <person name="Pujic P."/>
            <person name="Purnelle B."/>
            <person name="Rapoport G."/>
            <person name="Rey M."/>
            <person name="Reynolds S."/>
            <person name="Rieger M."/>
            <person name="Rivolta C."/>
            <person name="Rocha E."/>
            <person name="Roche B."/>
            <person name="Rose M."/>
            <person name="Sadaie Y."/>
            <person name="Sato T."/>
            <person name="Scanlan E."/>
            <person name="Schleich S."/>
            <person name="Schroeter R."/>
            <person name="Scoffone F."/>
            <person name="Sekiguchi J."/>
            <person name="Sekowska A."/>
            <person name="Seror S.J."/>
            <person name="Serror P."/>
            <person name="Shin B.-S."/>
            <person name="Soldo B."/>
            <person name="Sorokin A."/>
            <person name="Tacconi E."/>
            <person name="Takagi T."/>
            <person name="Takahashi H."/>
            <person name="Takemaru K."/>
            <person name="Takeuchi M."/>
            <person name="Tamakoshi A."/>
            <person name="Tanaka T."/>
            <person name="Terpstra P."/>
            <person name="Tognoni A."/>
            <person name="Tosato V."/>
            <person name="Uchiyama S."/>
            <person name="Vandenbol M."/>
            <person name="Vannier F."/>
            <person name="Vassarotti A."/>
            <person name="Viari A."/>
            <person name="Wambutt R."/>
            <person name="Wedler E."/>
            <person name="Wedler H."/>
            <person name="Weitzenegger T."/>
            <person name="Winters P."/>
            <person name="Wipat A."/>
            <person name="Yamamoto H."/>
            <person name="Yamane K."/>
            <person name="Yasumoto K."/>
            <person name="Yata K."/>
            <person name="Yoshida K."/>
            <person name="Yoshikawa H.-F."/>
            <person name="Zumstein E."/>
            <person name="Yoshikawa H."/>
            <person name="Danchin A."/>
        </authorList>
    </citation>
    <scope>NUCLEOTIDE SEQUENCE [LARGE SCALE GENOMIC DNA]</scope>
    <source>
        <strain>168</strain>
    </source>
</reference>
<reference key="2">
    <citation type="submission" date="2006-04" db="PDB data bank">
        <title>The crystal structure of ycgJ protein from Bacillus subtilis at 2.1 A resolution.</title>
        <authorList>
            <consortium name="New York structural genomix research consortium (NYSGXRC)"/>
        </authorList>
    </citation>
    <scope>X-RAY CRYSTALLOGRAPHY (2.1 ANGSTROMS) OF 26-253 IN COMPLEX WITH S-ADENOSYL-L-METHIONINE</scope>
    <source>
        <strain>168</strain>
    </source>
</reference>
<name>YCGJ_BACSU</name>
<feature type="chain" id="PRO_0000360862" description="Uncharacterized methyltransferase YcgJ">
    <location>
        <begin position="1"/>
        <end position="253"/>
    </location>
</feature>
<feature type="binding site" evidence="1">
    <location>
        <position position="45"/>
    </location>
    <ligand>
        <name>S-adenosyl-L-methionine</name>
        <dbReference type="ChEBI" id="CHEBI:59789"/>
    </ligand>
</feature>
<feature type="binding site">
    <location>
        <begin position="66"/>
        <end position="67"/>
    </location>
    <ligand>
        <name>S-adenosyl-L-methionine</name>
        <dbReference type="ChEBI" id="CHEBI:59789"/>
    </ligand>
</feature>
<feature type="binding site">
    <location>
        <begin position="94"/>
        <end position="95"/>
    </location>
    <ligand>
        <name>S-adenosyl-L-methionine</name>
        <dbReference type="ChEBI" id="CHEBI:59789"/>
    </ligand>
</feature>
<feature type="binding site" evidence="1">
    <location>
        <position position="110"/>
    </location>
    <ligand>
        <name>S-adenosyl-L-methionine</name>
        <dbReference type="ChEBI" id="CHEBI:59789"/>
    </ligand>
</feature>
<feature type="helix" evidence="3">
    <location>
        <begin position="27"/>
        <end position="33"/>
    </location>
</feature>
<feature type="strand" evidence="3">
    <location>
        <begin position="40"/>
        <end position="45"/>
    </location>
</feature>
<feature type="turn" evidence="4">
    <location>
        <begin position="47"/>
        <end position="49"/>
    </location>
</feature>
<feature type="helix" evidence="3">
    <location>
        <begin position="50"/>
        <end position="55"/>
    </location>
</feature>
<feature type="helix" evidence="3">
    <location>
        <begin position="56"/>
        <end position="58"/>
    </location>
</feature>
<feature type="strand" evidence="3">
    <location>
        <begin position="59"/>
        <end position="67"/>
    </location>
</feature>
<feature type="helix" evidence="3">
    <location>
        <begin position="69"/>
        <end position="82"/>
    </location>
</feature>
<feature type="strand" evidence="3">
    <location>
        <begin position="86"/>
        <end position="91"/>
    </location>
</feature>
<feature type="helix" evidence="4">
    <location>
        <begin position="94"/>
        <end position="96"/>
    </location>
</feature>
<feature type="strand" evidence="3">
    <location>
        <begin position="104"/>
        <end position="111"/>
    </location>
</feature>
<feature type="helix" evidence="3">
    <location>
        <begin position="113"/>
        <end position="115"/>
    </location>
</feature>
<feature type="helix" evidence="3">
    <location>
        <begin position="119"/>
        <end position="129"/>
    </location>
</feature>
<feature type="strand" evidence="3">
    <location>
        <begin position="130"/>
        <end position="141"/>
    </location>
</feature>
<feature type="helix" evidence="3">
    <location>
        <begin position="147"/>
        <end position="160"/>
    </location>
</feature>
<feature type="helix" evidence="3">
    <location>
        <begin position="170"/>
        <end position="179"/>
    </location>
</feature>
<feature type="strand" evidence="3">
    <location>
        <begin position="182"/>
        <end position="195"/>
    </location>
</feature>
<feature type="helix" evidence="3">
    <location>
        <begin position="196"/>
        <end position="203"/>
    </location>
</feature>
<feature type="helix" evidence="3">
    <location>
        <begin position="207"/>
        <end position="218"/>
    </location>
</feature>
<feature type="helix" evidence="3">
    <location>
        <begin position="222"/>
        <end position="227"/>
    </location>
</feature>
<feature type="strand" evidence="3">
    <location>
        <begin position="238"/>
        <end position="252"/>
    </location>
</feature>
<keyword id="KW-0002">3D-structure</keyword>
<keyword id="KW-0489">Methyltransferase</keyword>
<keyword id="KW-1185">Reference proteome</keyword>
<keyword id="KW-0949">S-adenosyl-L-methionine</keyword>
<keyword id="KW-0808">Transferase</keyword>
<protein>
    <recommendedName>
        <fullName>Uncharacterized methyltransferase YcgJ</fullName>
        <ecNumber>2.1.1.-</ecNumber>
    </recommendedName>
</protein>
<evidence type="ECO:0000269" key="1">
    <source ref="2"/>
</evidence>
<evidence type="ECO:0000305" key="2"/>
<evidence type="ECO:0007829" key="3">
    <source>
        <dbReference type="PDB" id="1XXL"/>
    </source>
</evidence>
<evidence type="ECO:0007829" key="4">
    <source>
        <dbReference type="PDB" id="2GLU"/>
    </source>
</evidence>
<proteinExistence type="evidence at protein level"/>
<gene>
    <name type="primary">ycgJ</name>
    <name type="ordered locus">BSU03160</name>
</gene>